<feature type="chain" id="PRO_0000401100" description="Insecticidal protein LA-b">
    <location>
        <begin position="1"/>
        <end position="13" status="greater than"/>
    </location>
</feature>
<feature type="domain" description="Chitin-binding type-1" evidence="1">
    <location>
        <begin position="3"/>
        <end position="13" status="greater than"/>
    </location>
</feature>
<feature type="non-terminal residue" evidence="3">
    <location>
        <position position="13"/>
    </location>
</feature>
<protein>
    <recommendedName>
        <fullName evidence="3">Insecticidal protein LA-b</fullName>
        <ecNumber>3.2.1.132</ecNumber>
        <ecNumber>3.2.1.14</ecNumber>
    </recommendedName>
    <alternativeName>
        <fullName evidence="3">Latex abundant protein b</fullName>
    </alternativeName>
</protein>
<keyword id="KW-0119">Carbohydrate metabolism</keyword>
<keyword id="KW-0146">Chitin degradation</keyword>
<keyword id="KW-0147">Chitin-binding</keyword>
<keyword id="KW-0903">Direct protein sequencing</keyword>
<keyword id="KW-0325">Glycoprotein</keyword>
<keyword id="KW-0326">Glycosidase</keyword>
<keyword id="KW-0378">Hydrolase</keyword>
<keyword id="KW-0611">Plant defense</keyword>
<keyword id="KW-0624">Polysaccharide degradation</keyword>
<keyword id="KW-0964">Secreted</keyword>
<reference evidence="4" key="1">
    <citation type="journal article" date="2010" name="BMC Biochem.">
        <title>Two chitinase-like proteins abundantly accumulated in latex of mulberry show insecticidal activity.</title>
        <authorList>
            <person name="Kitajima S."/>
            <person name="Kamei K."/>
            <person name="Taketani S."/>
            <person name="Yamaguchi M."/>
            <person name="Kawai F."/>
            <person name="Komatsu A."/>
            <person name="Inukai Y."/>
        </authorList>
    </citation>
    <scope>PROTEIN SEQUENCE</scope>
    <scope>FUNCTION</scope>
    <scope>CATALYTIC ACTIVITY</scope>
    <scope>SUBCELLULAR LOCATION</scope>
    <scope>GLYCOSYLATION</scope>
    <source>
        <strain evidence="2">cv. Minamisakari</strain>
        <tissue evidence="2">Latex</tissue>
    </source>
</reference>
<reference key="2">
    <citation type="submission" date="2011-08" db="UniProtKB">
        <authorList>
            <person name="Kitajima S."/>
        </authorList>
    </citation>
    <scope>SEQUENCE REVISION TO 1</scope>
</reference>
<dbReference type="EC" id="3.2.1.132"/>
<dbReference type="EC" id="3.2.1.14"/>
<dbReference type="GO" id="GO:0005576">
    <property type="term" value="C:extracellular region"/>
    <property type="evidence" value="ECO:0000314"/>
    <property type="project" value="UniProtKB"/>
</dbReference>
<dbReference type="GO" id="GO:0008061">
    <property type="term" value="F:chitin binding"/>
    <property type="evidence" value="ECO:0007669"/>
    <property type="project" value="UniProtKB-KW"/>
</dbReference>
<dbReference type="GO" id="GO:0004568">
    <property type="term" value="F:chitinase activity"/>
    <property type="evidence" value="ECO:0000314"/>
    <property type="project" value="UniProtKB"/>
</dbReference>
<dbReference type="GO" id="GO:0016977">
    <property type="term" value="F:chitosanase activity"/>
    <property type="evidence" value="ECO:0007669"/>
    <property type="project" value="UniProtKB-EC"/>
</dbReference>
<dbReference type="GO" id="GO:0008843">
    <property type="term" value="F:endochitinase activity"/>
    <property type="evidence" value="ECO:0007669"/>
    <property type="project" value="UniProtKB-EC"/>
</dbReference>
<dbReference type="GO" id="GO:0006032">
    <property type="term" value="P:chitin catabolic process"/>
    <property type="evidence" value="ECO:0000314"/>
    <property type="project" value="UniProtKB"/>
</dbReference>
<dbReference type="GO" id="GO:0002213">
    <property type="term" value="P:defense response to insect"/>
    <property type="evidence" value="ECO:0000314"/>
    <property type="project" value="UniProtKB"/>
</dbReference>
<dbReference type="GO" id="GO:0000272">
    <property type="term" value="P:polysaccharide catabolic process"/>
    <property type="evidence" value="ECO:0007669"/>
    <property type="project" value="UniProtKB-KW"/>
</dbReference>
<organism>
    <name type="scientific">Morus alba</name>
    <name type="common">White mulberry</name>
    <dbReference type="NCBI Taxonomy" id="3498"/>
    <lineage>
        <taxon>Eukaryota</taxon>
        <taxon>Viridiplantae</taxon>
        <taxon>Streptophyta</taxon>
        <taxon>Embryophyta</taxon>
        <taxon>Tracheophyta</taxon>
        <taxon>Spermatophyta</taxon>
        <taxon>Magnoliopsida</taxon>
        <taxon>eudicotyledons</taxon>
        <taxon>Gunneridae</taxon>
        <taxon>Pentapetalae</taxon>
        <taxon>rosids</taxon>
        <taxon>fabids</taxon>
        <taxon>Rosales</taxon>
        <taxon>Moraceae</taxon>
        <taxon>Moreae</taxon>
        <taxon>Morus</taxon>
    </lineage>
</organism>
<proteinExistence type="evidence at protein level"/>
<sequence length="13" mass="1328">SEQQXGRDVGGAL</sequence>
<evidence type="ECO:0000255" key="1">
    <source>
        <dbReference type="PROSITE-ProRule" id="PRU00261"/>
    </source>
</evidence>
<evidence type="ECO:0000269" key="2">
    <source>
    </source>
</evidence>
<evidence type="ECO:0000303" key="3">
    <source>
    </source>
</evidence>
<evidence type="ECO:0000305" key="4"/>
<accession>P86800</accession>
<comment type="function">
    <text evidence="2">Has insecticidal activity when consumed by D.melanogaster larvae. Has low chitinase and chitosanase activity.</text>
</comment>
<comment type="catalytic activity">
    <reaction evidence="2">
        <text>Random endo-hydrolysis of N-acetyl-beta-D-glucosaminide (1-&gt;4)-beta-linkages in chitin and chitodextrins.</text>
        <dbReference type="EC" id="3.2.1.14"/>
    </reaction>
</comment>
<comment type="catalytic activity">
    <reaction evidence="2">
        <text>Endohydrolysis of beta-(1-&gt;4)-linkages between D-glucosamine residues in a partly acetylated chitosan.</text>
        <dbReference type="EC" id="3.2.1.132"/>
    </reaction>
</comment>
<comment type="subcellular location">
    <subcellularLocation>
        <location evidence="2">Secreted</location>
    </subcellularLocation>
</comment>
<comment type="PTM">
    <text evidence="2">Glycosylated; contains galactose.</text>
</comment>
<name>IPLAB_MORAL</name>